<dbReference type="EMBL" id="Z75184">
    <property type="protein sequence ID" value="CAA99502.1"/>
    <property type="molecule type" value="Genomic_DNA"/>
</dbReference>
<dbReference type="PIR" id="S67179">
    <property type="entry name" value="S67179"/>
</dbReference>
<dbReference type="PaxDb" id="4932-YOR277C"/>
<dbReference type="EnsemblFungi" id="YOR277C_mRNA">
    <property type="protein sequence ID" value="YOR277C"/>
    <property type="gene ID" value="YOR277C"/>
</dbReference>
<dbReference type="AGR" id="SGD:S000005803"/>
<dbReference type="SGD" id="S000005803">
    <property type="gene designation" value="YOR277C"/>
</dbReference>
<dbReference type="HOGENOM" id="CLU_2279650_0_0_1"/>
<dbReference type="GO" id="GO:0016020">
    <property type="term" value="C:membrane"/>
    <property type="evidence" value="ECO:0007669"/>
    <property type="project" value="UniProtKB-SubCell"/>
</dbReference>
<proteinExistence type="uncertain"/>
<protein>
    <recommendedName>
        <fullName>Putative uncharacterized protein YOR277C</fullName>
    </recommendedName>
</protein>
<organism>
    <name type="scientific">Saccharomyces cerevisiae (strain ATCC 204508 / S288c)</name>
    <name type="common">Baker's yeast</name>
    <dbReference type="NCBI Taxonomy" id="559292"/>
    <lineage>
        <taxon>Eukaryota</taxon>
        <taxon>Fungi</taxon>
        <taxon>Dikarya</taxon>
        <taxon>Ascomycota</taxon>
        <taxon>Saccharomycotina</taxon>
        <taxon>Saccharomycetes</taxon>
        <taxon>Saccharomycetales</taxon>
        <taxon>Saccharomycetaceae</taxon>
        <taxon>Saccharomyces</taxon>
    </lineage>
</organism>
<keyword id="KW-0472">Membrane</keyword>
<keyword id="KW-0812">Transmembrane</keyword>
<keyword id="KW-1133">Transmembrane helix</keyword>
<gene>
    <name type="ordered locus">YOR277C</name>
    <name type="ORF">O5456</name>
</gene>
<name>YO277_YEAST</name>
<comment type="subcellular location">
    <subcellularLocation>
        <location evidence="2">Membrane</location>
        <topology evidence="2">Single-pass membrane protein</topology>
    </subcellularLocation>
</comment>
<comment type="miscellaneous">
    <text evidence="2">Almost completely overlaps CAF20.</text>
</comment>
<comment type="caution">
    <text evidence="3">Product of a dubious gene prediction unlikely to encode a functional protein. Because of that it is not part of the S.cerevisiae S288c complete/reference proteome set.</text>
</comment>
<evidence type="ECO:0000255" key="1"/>
<evidence type="ECO:0000305" key="2"/>
<evidence type="ECO:0000305" key="3">
    <source>
    </source>
</evidence>
<accession>Q08736</accession>
<sequence>MTYASSSSSSLSKAANALKPRIGLSATISLVSAGLLEEIFLLFGLTFKVSWAMVATGTVEVGVVSVSSSSSSPLPFFLASNVHQPSESVVTLGLLCLIFGLP</sequence>
<feature type="chain" id="PRO_0000299731" description="Putative uncharacterized protein YOR277C">
    <location>
        <begin position="1"/>
        <end position="102"/>
    </location>
</feature>
<feature type="transmembrane region" description="Helical" evidence="1">
    <location>
        <begin position="27"/>
        <end position="47"/>
    </location>
</feature>
<reference key="1">
    <citation type="journal article" date="1997" name="Nature">
        <title>The nucleotide sequence of Saccharomyces cerevisiae chromosome XV.</title>
        <authorList>
            <person name="Dujon B."/>
            <person name="Albermann K."/>
            <person name="Aldea M."/>
            <person name="Alexandraki D."/>
            <person name="Ansorge W."/>
            <person name="Arino J."/>
            <person name="Benes V."/>
            <person name="Bohn C."/>
            <person name="Bolotin-Fukuhara M."/>
            <person name="Bordonne R."/>
            <person name="Boyer J."/>
            <person name="Camasses A."/>
            <person name="Casamayor A."/>
            <person name="Casas C."/>
            <person name="Cheret G."/>
            <person name="Cziepluch C."/>
            <person name="Daignan-Fornier B."/>
            <person name="Dang V.-D."/>
            <person name="de Haan M."/>
            <person name="Delius H."/>
            <person name="Durand P."/>
            <person name="Fairhead C."/>
            <person name="Feldmann H."/>
            <person name="Gaillon L."/>
            <person name="Galisson F."/>
            <person name="Gamo F.-J."/>
            <person name="Gancedo C."/>
            <person name="Goffeau A."/>
            <person name="Goulding S.E."/>
            <person name="Grivell L.A."/>
            <person name="Habbig B."/>
            <person name="Hand N.J."/>
            <person name="Hani J."/>
            <person name="Hattenhorst U."/>
            <person name="Hebling U."/>
            <person name="Hernando Y."/>
            <person name="Herrero E."/>
            <person name="Heumann K."/>
            <person name="Hiesel R."/>
            <person name="Hilger F."/>
            <person name="Hofmann B."/>
            <person name="Hollenberg C.P."/>
            <person name="Hughes B."/>
            <person name="Jauniaux J.-C."/>
            <person name="Kalogeropoulos A."/>
            <person name="Katsoulou C."/>
            <person name="Kordes E."/>
            <person name="Lafuente M.J."/>
            <person name="Landt O."/>
            <person name="Louis E.J."/>
            <person name="Maarse A.C."/>
            <person name="Madania A."/>
            <person name="Mannhaupt G."/>
            <person name="Marck C."/>
            <person name="Martin R.P."/>
            <person name="Mewes H.-W."/>
            <person name="Michaux G."/>
            <person name="Paces V."/>
            <person name="Parle-McDermott A.G."/>
            <person name="Pearson B.M."/>
            <person name="Perrin A."/>
            <person name="Pettersson B."/>
            <person name="Poch O."/>
            <person name="Pohl T.M."/>
            <person name="Poirey R."/>
            <person name="Portetelle D."/>
            <person name="Pujol A."/>
            <person name="Purnelle B."/>
            <person name="Ramezani Rad M."/>
            <person name="Rechmann S."/>
            <person name="Schwager C."/>
            <person name="Schweizer M."/>
            <person name="Sor F."/>
            <person name="Sterky F."/>
            <person name="Tarassov I.A."/>
            <person name="Teodoru C."/>
            <person name="Tettelin H."/>
            <person name="Thierry A."/>
            <person name="Tobiasch E."/>
            <person name="Tzermia M."/>
            <person name="Uhlen M."/>
            <person name="Unseld M."/>
            <person name="Valens M."/>
            <person name="Vandenbol M."/>
            <person name="Vetter I."/>
            <person name="Vlcek C."/>
            <person name="Voet M."/>
            <person name="Volckaert G."/>
            <person name="Voss H."/>
            <person name="Wambutt R."/>
            <person name="Wedler H."/>
            <person name="Wiemann S."/>
            <person name="Winsor B."/>
            <person name="Wolfe K.H."/>
            <person name="Zollner A."/>
            <person name="Zumstein E."/>
            <person name="Kleine K."/>
        </authorList>
    </citation>
    <scope>NUCLEOTIDE SEQUENCE [LARGE SCALE GENOMIC DNA]</scope>
    <source>
        <strain>ATCC 204508 / S288c</strain>
    </source>
</reference>
<reference key="2">
    <citation type="journal article" date="2014" name="G3 (Bethesda)">
        <title>The reference genome sequence of Saccharomyces cerevisiae: Then and now.</title>
        <authorList>
            <person name="Engel S.R."/>
            <person name="Dietrich F.S."/>
            <person name="Fisk D.G."/>
            <person name="Binkley G."/>
            <person name="Balakrishnan R."/>
            <person name="Costanzo M.C."/>
            <person name="Dwight S.S."/>
            <person name="Hitz B.C."/>
            <person name="Karra K."/>
            <person name="Nash R.S."/>
            <person name="Weng S."/>
            <person name="Wong E.D."/>
            <person name="Lloyd P."/>
            <person name="Skrzypek M.S."/>
            <person name="Miyasato S.R."/>
            <person name="Simison M."/>
            <person name="Cherry J.M."/>
        </authorList>
    </citation>
    <scope>GENOME REANNOTATION</scope>
    <source>
        <strain>ATCC 204508 / S288c</strain>
    </source>
</reference>